<keyword id="KW-0479">Metal-binding</keyword>
<keyword id="KW-1185">Reference proteome</keyword>
<keyword id="KW-0687">Ribonucleoprotein</keyword>
<keyword id="KW-0689">Ribosomal protein</keyword>
<keyword id="KW-0862">Zinc</keyword>
<keyword id="KW-0863">Zinc-finger</keyword>
<protein>
    <recommendedName>
        <fullName evidence="1">Small ribosomal subunit protein eS27</fullName>
    </recommendedName>
    <alternativeName>
        <fullName evidence="2">30S ribosomal protein S27e</fullName>
    </alternativeName>
</protein>
<name>RS27_METAC</name>
<organism>
    <name type="scientific">Methanosarcina acetivorans (strain ATCC 35395 / DSM 2834 / JCM 12185 / C2A)</name>
    <dbReference type="NCBI Taxonomy" id="188937"/>
    <lineage>
        <taxon>Archaea</taxon>
        <taxon>Methanobacteriati</taxon>
        <taxon>Methanobacteriota</taxon>
        <taxon>Stenosarchaea group</taxon>
        <taxon>Methanomicrobia</taxon>
        <taxon>Methanosarcinales</taxon>
        <taxon>Methanosarcinaceae</taxon>
        <taxon>Methanosarcina</taxon>
    </lineage>
</organism>
<reference key="1">
    <citation type="journal article" date="2002" name="Genome Res.">
        <title>The genome of Methanosarcina acetivorans reveals extensive metabolic and physiological diversity.</title>
        <authorList>
            <person name="Galagan J.E."/>
            <person name="Nusbaum C."/>
            <person name="Roy A."/>
            <person name="Endrizzi M.G."/>
            <person name="Macdonald P."/>
            <person name="FitzHugh W."/>
            <person name="Calvo S."/>
            <person name="Engels R."/>
            <person name="Smirnov S."/>
            <person name="Atnoor D."/>
            <person name="Brown A."/>
            <person name="Allen N."/>
            <person name="Naylor J."/>
            <person name="Stange-Thomann N."/>
            <person name="DeArellano K."/>
            <person name="Johnson R."/>
            <person name="Linton L."/>
            <person name="McEwan P."/>
            <person name="McKernan K."/>
            <person name="Talamas J."/>
            <person name="Tirrell A."/>
            <person name="Ye W."/>
            <person name="Zimmer A."/>
            <person name="Barber R.D."/>
            <person name="Cann I."/>
            <person name="Graham D.E."/>
            <person name="Grahame D.A."/>
            <person name="Guss A.M."/>
            <person name="Hedderich R."/>
            <person name="Ingram-Smith C."/>
            <person name="Kuettner H.C."/>
            <person name="Krzycki J.A."/>
            <person name="Leigh J.A."/>
            <person name="Li W."/>
            <person name="Liu J."/>
            <person name="Mukhopadhyay B."/>
            <person name="Reeve J.N."/>
            <person name="Smith K."/>
            <person name="Springer T.A."/>
            <person name="Umayam L.A."/>
            <person name="White O."/>
            <person name="White R.H."/>
            <person name="de Macario E.C."/>
            <person name="Ferry J.G."/>
            <person name="Jarrell K.F."/>
            <person name="Jing H."/>
            <person name="Macario A.J.L."/>
            <person name="Paulsen I.T."/>
            <person name="Pritchett M."/>
            <person name="Sowers K.R."/>
            <person name="Swanson R.V."/>
            <person name="Zinder S.H."/>
            <person name="Lander E."/>
            <person name="Metcalf W.W."/>
            <person name="Birren B."/>
        </authorList>
    </citation>
    <scope>NUCLEOTIDE SEQUENCE [LARGE SCALE GENOMIC DNA]</scope>
    <source>
        <strain>ATCC 35395 / DSM 2834 / JCM 12185 / C2A</strain>
    </source>
</reference>
<proteinExistence type="inferred from homology"/>
<sequence length="62" mass="6945">MVDYTQRPKSRFLRVKCNDCENEQIIFGSASRKITCVVCGRTLAEPTGGKSTITTHILEVLE</sequence>
<accession>P61931</accession>
<accession>Q8TSZ8</accession>
<evidence type="ECO:0000255" key="1">
    <source>
        <dbReference type="HAMAP-Rule" id="MF_00371"/>
    </source>
</evidence>
<evidence type="ECO:0000305" key="2"/>
<comment type="cofactor">
    <cofactor evidence="1">
        <name>Zn(2+)</name>
        <dbReference type="ChEBI" id="CHEBI:29105"/>
    </cofactor>
    <text evidence="1">Binds 1 zinc ion per subunit.</text>
</comment>
<comment type="subunit">
    <text evidence="1">Part of the 30S ribosomal subunit.</text>
</comment>
<comment type="similarity">
    <text evidence="1">Belongs to the eukaryotic ribosomal protein eS27 family.</text>
</comment>
<feature type="chain" id="PRO_0000149071" description="Small ribosomal subunit protein eS27">
    <location>
        <begin position="1"/>
        <end position="62"/>
    </location>
</feature>
<feature type="zinc finger region" description="C4-type" evidence="1">
    <location>
        <begin position="17"/>
        <end position="39"/>
    </location>
</feature>
<feature type="binding site" evidence="1">
    <location>
        <position position="17"/>
    </location>
    <ligand>
        <name>Zn(2+)</name>
        <dbReference type="ChEBI" id="CHEBI:29105"/>
    </ligand>
</feature>
<feature type="binding site" evidence="1">
    <location>
        <position position="20"/>
    </location>
    <ligand>
        <name>Zn(2+)</name>
        <dbReference type="ChEBI" id="CHEBI:29105"/>
    </ligand>
</feature>
<feature type="binding site" evidence="1">
    <location>
        <position position="36"/>
    </location>
    <ligand>
        <name>Zn(2+)</name>
        <dbReference type="ChEBI" id="CHEBI:29105"/>
    </ligand>
</feature>
<feature type="binding site" evidence="1">
    <location>
        <position position="39"/>
    </location>
    <ligand>
        <name>Zn(2+)</name>
        <dbReference type="ChEBI" id="CHEBI:29105"/>
    </ligand>
</feature>
<dbReference type="EMBL" id="AE010299">
    <property type="protein sequence ID" value="AAM04087.1"/>
    <property type="molecule type" value="Genomic_DNA"/>
</dbReference>
<dbReference type="RefSeq" id="WP_011020692.1">
    <property type="nucleotide sequence ID" value="NC_003552.1"/>
</dbReference>
<dbReference type="SMR" id="P61931"/>
<dbReference type="FunCoup" id="P61931">
    <property type="interactions" value="130"/>
</dbReference>
<dbReference type="STRING" id="188937.MA_0645"/>
<dbReference type="EnsemblBacteria" id="AAM04087">
    <property type="protein sequence ID" value="AAM04087"/>
    <property type="gene ID" value="MA_0645"/>
</dbReference>
<dbReference type="KEGG" id="mac:MA_0645"/>
<dbReference type="HOGENOM" id="CLU_199465_0_0_2"/>
<dbReference type="InParanoid" id="P61931"/>
<dbReference type="OrthoDB" id="5718at2157"/>
<dbReference type="PhylomeDB" id="P61931"/>
<dbReference type="Proteomes" id="UP000002487">
    <property type="component" value="Chromosome"/>
</dbReference>
<dbReference type="GO" id="GO:0022627">
    <property type="term" value="C:cytosolic small ribosomal subunit"/>
    <property type="evidence" value="ECO:0000318"/>
    <property type="project" value="GO_Central"/>
</dbReference>
<dbReference type="GO" id="GO:0003723">
    <property type="term" value="F:RNA binding"/>
    <property type="evidence" value="ECO:0000318"/>
    <property type="project" value="GO_Central"/>
</dbReference>
<dbReference type="GO" id="GO:0003735">
    <property type="term" value="F:structural constituent of ribosome"/>
    <property type="evidence" value="ECO:0000318"/>
    <property type="project" value="GO_Central"/>
</dbReference>
<dbReference type="GO" id="GO:0008270">
    <property type="term" value="F:zinc ion binding"/>
    <property type="evidence" value="ECO:0007669"/>
    <property type="project" value="UniProtKB-UniRule"/>
</dbReference>
<dbReference type="GO" id="GO:0000028">
    <property type="term" value="P:ribosomal small subunit assembly"/>
    <property type="evidence" value="ECO:0000318"/>
    <property type="project" value="GO_Central"/>
</dbReference>
<dbReference type="GO" id="GO:0006412">
    <property type="term" value="P:translation"/>
    <property type="evidence" value="ECO:0007669"/>
    <property type="project" value="UniProtKB-UniRule"/>
</dbReference>
<dbReference type="FunFam" id="2.20.25.100:FF:000002">
    <property type="entry name" value="30S ribosomal protein S27e"/>
    <property type="match status" value="1"/>
</dbReference>
<dbReference type="Gene3D" id="2.20.25.100">
    <property type="entry name" value="Zn-binding ribosomal proteins"/>
    <property type="match status" value="1"/>
</dbReference>
<dbReference type="HAMAP" id="MF_00371">
    <property type="entry name" value="Ribosomal_eS27"/>
    <property type="match status" value="1"/>
</dbReference>
<dbReference type="InterPro" id="IPR000592">
    <property type="entry name" value="Ribosomal_eS27"/>
</dbReference>
<dbReference type="InterPro" id="IPR023407">
    <property type="entry name" value="Ribosomal_eS27_Zn-bd_dom_sf"/>
</dbReference>
<dbReference type="InterPro" id="IPR011332">
    <property type="entry name" value="Ribosomal_zn-bd"/>
</dbReference>
<dbReference type="NCBIfam" id="NF001629">
    <property type="entry name" value="PRK00415.1"/>
    <property type="match status" value="1"/>
</dbReference>
<dbReference type="Pfam" id="PF01667">
    <property type="entry name" value="Ribosomal_S27e"/>
    <property type="match status" value="1"/>
</dbReference>
<dbReference type="SUPFAM" id="SSF57829">
    <property type="entry name" value="Zn-binding ribosomal proteins"/>
    <property type="match status" value="1"/>
</dbReference>
<dbReference type="PROSITE" id="PS01168">
    <property type="entry name" value="RIBOSOMAL_S27E"/>
    <property type="match status" value="1"/>
</dbReference>
<gene>
    <name evidence="1" type="primary">rps27e</name>
    <name type="ordered locus">MA_0645</name>
</gene>